<name>AL1B1_HUMAN</name>
<feature type="transit peptide" description="Mitochondrion" evidence="3">
    <location>
        <begin position="1"/>
        <end position="17"/>
    </location>
</feature>
<feature type="chain" id="PRO_0000007172" description="Aldehyde dehydrogenase X, mitochondrial">
    <location>
        <begin position="18"/>
        <end position="517"/>
    </location>
</feature>
<feature type="active site" description="Proton acceptor" evidence="4 5">
    <location>
        <position position="285"/>
    </location>
</feature>
<feature type="active site" description="Nucleophile" evidence="4 5">
    <location>
        <position position="319"/>
    </location>
</feature>
<feature type="binding site" evidence="1">
    <location>
        <begin position="262"/>
        <end position="267"/>
    </location>
    <ligand>
        <name>NAD(+)</name>
        <dbReference type="ChEBI" id="CHEBI:57540"/>
    </ligand>
</feature>
<feature type="site" description="Transition state stabilizer" evidence="1">
    <location>
        <position position="186"/>
    </location>
</feature>
<feature type="modified residue" description="N6-acetyllysine" evidence="2">
    <location>
        <position position="51"/>
    </location>
</feature>
<feature type="modified residue" description="N6-acetyllysine; alternate" evidence="2">
    <location>
        <position position="52"/>
    </location>
</feature>
<feature type="modified residue" description="N6-succinyllysine; alternate" evidence="2">
    <location>
        <position position="52"/>
    </location>
</feature>
<feature type="modified residue" description="N6-succinyllysine" evidence="2">
    <location>
        <position position="81"/>
    </location>
</feature>
<feature type="modified residue" description="N6-acetyllysine; alternate" evidence="2">
    <location>
        <position position="364"/>
    </location>
</feature>
<feature type="modified residue" description="N6-succinyllysine; alternate" evidence="2">
    <location>
        <position position="364"/>
    </location>
</feature>
<feature type="modified residue" description="N6-acetyllysine; alternate" evidence="2">
    <location>
        <position position="383"/>
    </location>
</feature>
<feature type="modified residue" description="N6-succinyllysine; alternate" evidence="2">
    <location>
        <position position="383"/>
    </location>
</feature>
<feature type="modified residue" description="N6-acetyllysine; alternate" evidence="2">
    <location>
        <position position="399"/>
    </location>
</feature>
<feature type="modified residue" description="N6-succinyllysine; alternate" evidence="2">
    <location>
        <position position="399"/>
    </location>
</feature>
<feature type="modified residue" description="N6-acetyllysine; alternate" evidence="2">
    <location>
        <position position="414"/>
    </location>
</feature>
<feature type="modified residue" description="N6-succinyllysine; alternate" evidence="2">
    <location>
        <position position="414"/>
    </location>
</feature>
<feature type="modified residue" description="N6-acetyllysine; alternate" evidence="2">
    <location>
        <position position="426"/>
    </location>
</feature>
<feature type="modified residue" description="N6-succinyllysine; alternate" evidence="2">
    <location>
        <position position="426"/>
    </location>
</feature>
<feature type="modified residue" description="N6-acetyllysine" evidence="2">
    <location>
        <position position="429"/>
    </location>
</feature>
<feature type="sequence variant" id="VAR_002257" description="In dbSNP:rs2228093." evidence="9">
    <original>A</original>
    <variation>V</variation>
    <location>
        <position position="86"/>
    </location>
</feature>
<feature type="sequence variant" id="VAR_002258" description="In dbSNP:rs2073478." evidence="7 8 9 10">
    <original>R</original>
    <variation>L</variation>
    <location>
        <position position="107"/>
    </location>
</feature>
<feature type="sequence variant" id="VAR_029891" description="In dbSNP:rs4646773.">
    <original>T</original>
    <variation>I</variation>
    <location>
        <position position="202"/>
    </location>
</feature>
<feature type="sequence variant" id="VAR_029892" description="In dbSNP:rs4878199." evidence="6 7 8 10">
    <original>V</original>
    <variation>M</variation>
    <location>
        <position position="253"/>
    </location>
</feature>
<feature type="sequence conflict" description="In Ref. 1; AAA96830." evidence="11" ref="1">
    <original>R</original>
    <variation>L</variation>
    <location>
        <position position="18"/>
    </location>
</feature>
<feature type="sequence conflict" description="In Ref. 1; AAA96830." evidence="11" ref="1">
    <original>D</original>
    <variation>H</variation>
    <location>
        <position position="164"/>
    </location>
</feature>
<feature type="strand" evidence="13">
    <location>
        <begin position="38"/>
        <end position="41"/>
    </location>
</feature>
<feature type="strand" evidence="13">
    <location>
        <begin position="44"/>
        <end position="46"/>
    </location>
</feature>
<feature type="strand" evidence="13">
    <location>
        <begin position="53"/>
        <end position="57"/>
    </location>
</feature>
<feature type="turn" evidence="13">
    <location>
        <begin position="59"/>
        <end position="61"/>
    </location>
</feature>
<feature type="strand" evidence="13">
    <location>
        <begin position="64"/>
        <end position="69"/>
    </location>
</feature>
<feature type="helix" evidence="13">
    <location>
        <begin position="73"/>
        <end position="87"/>
    </location>
</feature>
<feature type="helix" evidence="13">
    <location>
        <begin position="92"/>
        <end position="95"/>
    </location>
</feature>
<feature type="helix" evidence="13">
    <location>
        <begin position="98"/>
        <end position="114"/>
    </location>
</feature>
<feature type="helix" evidence="13">
    <location>
        <begin position="116"/>
        <end position="127"/>
    </location>
</feature>
<feature type="helix" evidence="13">
    <location>
        <begin position="131"/>
        <end position="136"/>
    </location>
</feature>
<feature type="helix" evidence="13">
    <location>
        <begin position="138"/>
        <end position="152"/>
    </location>
</feature>
<feature type="turn" evidence="13">
    <location>
        <begin position="153"/>
        <end position="155"/>
    </location>
</feature>
<feature type="strand" evidence="13">
    <location>
        <begin position="164"/>
        <end position="175"/>
    </location>
</feature>
<feature type="strand" evidence="13">
    <location>
        <begin position="178"/>
        <end position="182"/>
    </location>
</feature>
<feature type="strand" evidence="13">
    <location>
        <begin position="185"/>
        <end position="187"/>
    </location>
</feature>
<feature type="helix" evidence="13">
    <location>
        <begin position="188"/>
        <end position="201"/>
    </location>
</feature>
<feature type="strand" evidence="13">
    <location>
        <begin position="205"/>
        <end position="210"/>
    </location>
</feature>
<feature type="strand" evidence="12">
    <location>
        <begin position="212"/>
        <end position="214"/>
    </location>
</feature>
<feature type="helix" evidence="13">
    <location>
        <begin position="216"/>
        <end position="228"/>
    </location>
</feature>
<feature type="strand" evidence="13">
    <location>
        <begin position="234"/>
        <end position="240"/>
    </location>
</feature>
<feature type="turn" evidence="13">
    <location>
        <begin position="242"/>
        <end position="244"/>
    </location>
</feature>
<feature type="helix" evidence="13">
    <location>
        <begin position="245"/>
        <end position="251"/>
    </location>
</feature>
<feature type="strand" evidence="13">
    <location>
        <begin position="257"/>
        <end position="262"/>
    </location>
</feature>
<feature type="helix" evidence="13">
    <location>
        <begin position="264"/>
        <end position="276"/>
    </location>
</feature>
<feature type="strand" evidence="13">
    <location>
        <begin position="281"/>
        <end position="285"/>
    </location>
</feature>
<feature type="strand" evidence="13">
    <location>
        <begin position="290"/>
        <end position="294"/>
    </location>
</feature>
<feature type="helix" evidence="13">
    <location>
        <begin position="300"/>
        <end position="312"/>
    </location>
</feature>
<feature type="helix" evidence="13">
    <location>
        <begin position="313"/>
        <end position="316"/>
    </location>
</feature>
<feature type="strand" evidence="13">
    <location>
        <begin position="322"/>
        <end position="328"/>
    </location>
</feature>
<feature type="helix" evidence="13">
    <location>
        <begin position="329"/>
        <end position="331"/>
    </location>
</feature>
<feature type="helix" evidence="13">
    <location>
        <begin position="332"/>
        <end position="345"/>
    </location>
</feature>
<feature type="helix" evidence="13">
    <location>
        <begin position="364"/>
        <end position="379"/>
    </location>
</feature>
<feature type="strand" evidence="13">
    <location>
        <begin position="383"/>
        <end position="386"/>
    </location>
</feature>
<feature type="strand" evidence="13">
    <location>
        <begin position="389"/>
        <end position="396"/>
    </location>
</feature>
<feature type="strand" evidence="13">
    <location>
        <begin position="401"/>
        <end position="405"/>
    </location>
</feature>
<feature type="helix" evidence="13">
    <location>
        <begin position="411"/>
        <end position="414"/>
    </location>
</feature>
<feature type="strand" evidence="13">
    <location>
        <begin position="419"/>
        <end position="427"/>
    </location>
</feature>
<feature type="helix" evidence="13">
    <location>
        <begin position="430"/>
        <end position="438"/>
    </location>
</feature>
<feature type="strand" evidence="13">
    <location>
        <begin position="444"/>
        <end position="449"/>
    </location>
</feature>
<feature type="helix" evidence="13">
    <location>
        <begin position="453"/>
        <end position="462"/>
    </location>
</feature>
<feature type="strand" evidence="13">
    <location>
        <begin position="466"/>
        <end position="471"/>
    </location>
</feature>
<feature type="helix" evidence="13">
    <location>
        <begin position="486"/>
        <end position="488"/>
    </location>
</feature>
<feature type="strand" evidence="13">
    <location>
        <begin position="489"/>
        <end position="491"/>
    </location>
</feature>
<feature type="helix" evidence="13">
    <location>
        <begin position="497"/>
        <end position="502"/>
    </location>
</feature>
<feature type="strand" evidence="13">
    <location>
        <begin position="503"/>
        <end position="511"/>
    </location>
</feature>
<organism>
    <name type="scientific">Homo sapiens</name>
    <name type="common">Human</name>
    <dbReference type="NCBI Taxonomy" id="9606"/>
    <lineage>
        <taxon>Eukaryota</taxon>
        <taxon>Metazoa</taxon>
        <taxon>Chordata</taxon>
        <taxon>Craniata</taxon>
        <taxon>Vertebrata</taxon>
        <taxon>Euteleostomi</taxon>
        <taxon>Mammalia</taxon>
        <taxon>Eutheria</taxon>
        <taxon>Euarchontoglires</taxon>
        <taxon>Primates</taxon>
        <taxon>Haplorrhini</taxon>
        <taxon>Catarrhini</taxon>
        <taxon>Hominidae</taxon>
        <taxon>Homo</taxon>
    </lineage>
</organism>
<gene>
    <name type="primary">ALDH1B1</name>
    <name type="synonym">ALDH5</name>
    <name type="synonym">ALDHX</name>
</gene>
<sequence length="517" mass="57249">MLRFLAPRLLSLQGRTARYSSAAALPSPILNPDIPYNQLFINNEWQDAVSKKTFPTVNPTTGEVIGHVAEGDRADVDRAVKAAREAFRLGSPWRRMDASERGRLLNRLADLVERDRVYLASLETLDNGKPFQESYALDLDEVIKVYRYFAGWADKWHGKTIPMDGQHFCFTRHEPVGVCGQIIPWNFPLVMQGWKLAPALATGNTVVMKVAEQTPLSALYLASLIKEAGFPPGVVNIITGYGPTAGAAIAQHVDVDKVAFTGSTEVGHLIQKAAGDSNLKRVTLELGGKSPSIVLADADMEHAVEQCHEALFFNMGQCCCAGSRTFVEESIYNEFLERTVEKAKQRKVGNPFELDTQQGPQVDKEQFERVLGYIQLGQKEGAKLLCGGERFGERGFFIKPTVFGGVQDDMRIAKEEIFGPVQPLFKFKKIEEVVERANNTRYGLAAAVFTRDLDKAMYFTQALQAGTVWVNTYNIVTCHTPFGGFKESGNGRELGEDGLKAYTEVKTVTIKVPQKNS</sequence>
<comment type="function">
    <text>ALDHs play a major role in the detoxification of alcohol-derived acetaldehyde. They are involved in the metabolism of corticosteroids, biogenic amines, neurotransmitters, and lipid peroxidation.</text>
</comment>
<comment type="catalytic activity">
    <reaction>
        <text>an aldehyde + NAD(+) + H2O = a carboxylate + NADH + 2 H(+)</text>
        <dbReference type="Rhea" id="RHEA:16185"/>
        <dbReference type="ChEBI" id="CHEBI:15377"/>
        <dbReference type="ChEBI" id="CHEBI:15378"/>
        <dbReference type="ChEBI" id="CHEBI:17478"/>
        <dbReference type="ChEBI" id="CHEBI:29067"/>
        <dbReference type="ChEBI" id="CHEBI:57540"/>
        <dbReference type="ChEBI" id="CHEBI:57945"/>
        <dbReference type="EC" id="1.2.1.3"/>
    </reaction>
</comment>
<comment type="pathway">
    <text>Alcohol metabolism; ethanol degradation; acetate from ethanol: step 2/2.</text>
</comment>
<comment type="subunit">
    <text evidence="1">Homotetramer.</text>
</comment>
<comment type="subcellular location">
    <subcellularLocation>
        <location>Mitochondrion matrix</location>
    </subcellularLocation>
</comment>
<comment type="tissue specificity">
    <text>Liver, testis and to a lesser extent in brain.</text>
</comment>
<comment type="similarity">
    <text evidence="11">Belongs to the aldehyde dehydrogenase family.</text>
</comment>
<evidence type="ECO:0000250" key="1"/>
<evidence type="ECO:0000250" key="2">
    <source>
        <dbReference type="UniProtKB" id="Q9CZS1"/>
    </source>
</evidence>
<evidence type="ECO:0000255" key="3"/>
<evidence type="ECO:0000255" key="4">
    <source>
        <dbReference type="PROSITE-ProRule" id="PRU10007"/>
    </source>
</evidence>
<evidence type="ECO:0000255" key="5">
    <source>
        <dbReference type="PROSITE-ProRule" id="PRU10008"/>
    </source>
</evidence>
<evidence type="ECO:0000269" key="6">
    <source>
    </source>
</evidence>
<evidence type="ECO:0000269" key="7">
    <source>
    </source>
</evidence>
<evidence type="ECO:0000269" key="8">
    <source>
    </source>
</evidence>
<evidence type="ECO:0000269" key="9">
    <source>
    </source>
</evidence>
<evidence type="ECO:0000269" key="10">
    <source ref="2"/>
</evidence>
<evidence type="ECO:0000305" key="11"/>
<evidence type="ECO:0007829" key="12">
    <source>
        <dbReference type="PDB" id="7MJC"/>
    </source>
</evidence>
<evidence type="ECO:0007829" key="13">
    <source>
        <dbReference type="PDB" id="7MJD"/>
    </source>
</evidence>
<proteinExistence type="evidence at protein level"/>
<reference key="1">
    <citation type="journal article" date="1991" name="J. Biol. Chem.">
        <title>Cloning and characterization of a new functional human aldehyde dehydrogenase gene.</title>
        <authorList>
            <person name="Hsu L.C."/>
            <person name="Chang W.-C."/>
        </authorList>
    </citation>
    <scope>NUCLEOTIDE SEQUENCE [GENOMIC DNA]</scope>
    <scope>VARIANTS LEU-107 AND MET-253</scope>
    <source>
        <tissue>Testis</tissue>
    </source>
</reference>
<reference key="2">
    <citation type="submission" date="2003-05" db="EMBL/GenBank/DDBJ databases">
        <title>Cloning of human full-length CDSs in BD Creator(TM) system donor vector.</title>
        <authorList>
            <person name="Kalnine N."/>
            <person name="Chen X."/>
            <person name="Rolfs A."/>
            <person name="Halleck A."/>
            <person name="Hines L."/>
            <person name="Eisenstein S."/>
            <person name="Koundinya M."/>
            <person name="Raphael J."/>
            <person name="Moreira D."/>
            <person name="Kelley T."/>
            <person name="LaBaer J."/>
            <person name="Lin Y."/>
            <person name="Phelan M."/>
            <person name="Farmer A."/>
        </authorList>
    </citation>
    <scope>NUCLEOTIDE SEQUENCE [LARGE SCALE MRNA]</scope>
    <scope>VARIANTS LEU-107 AND MET-253</scope>
</reference>
<reference key="3">
    <citation type="journal article" date="2004" name="Nat. Genet.">
        <title>Complete sequencing and characterization of 21,243 full-length human cDNAs.</title>
        <authorList>
            <person name="Ota T."/>
            <person name="Suzuki Y."/>
            <person name="Nishikawa T."/>
            <person name="Otsuki T."/>
            <person name="Sugiyama T."/>
            <person name="Irie R."/>
            <person name="Wakamatsu A."/>
            <person name="Hayashi K."/>
            <person name="Sato H."/>
            <person name="Nagai K."/>
            <person name="Kimura K."/>
            <person name="Makita H."/>
            <person name="Sekine M."/>
            <person name="Obayashi M."/>
            <person name="Nishi T."/>
            <person name="Shibahara T."/>
            <person name="Tanaka T."/>
            <person name="Ishii S."/>
            <person name="Yamamoto J."/>
            <person name="Saito K."/>
            <person name="Kawai Y."/>
            <person name="Isono Y."/>
            <person name="Nakamura Y."/>
            <person name="Nagahari K."/>
            <person name="Murakami K."/>
            <person name="Yasuda T."/>
            <person name="Iwayanagi T."/>
            <person name="Wagatsuma M."/>
            <person name="Shiratori A."/>
            <person name="Sudo H."/>
            <person name="Hosoiri T."/>
            <person name="Kaku Y."/>
            <person name="Kodaira H."/>
            <person name="Kondo H."/>
            <person name="Sugawara M."/>
            <person name="Takahashi M."/>
            <person name="Kanda K."/>
            <person name="Yokoi T."/>
            <person name="Furuya T."/>
            <person name="Kikkawa E."/>
            <person name="Omura Y."/>
            <person name="Abe K."/>
            <person name="Kamihara K."/>
            <person name="Katsuta N."/>
            <person name="Sato K."/>
            <person name="Tanikawa M."/>
            <person name="Yamazaki M."/>
            <person name="Ninomiya K."/>
            <person name="Ishibashi T."/>
            <person name="Yamashita H."/>
            <person name="Murakawa K."/>
            <person name="Fujimori K."/>
            <person name="Tanai H."/>
            <person name="Kimata M."/>
            <person name="Watanabe M."/>
            <person name="Hiraoka S."/>
            <person name="Chiba Y."/>
            <person name="Ishida S."/>
            <person name="Ono Y."/>
            <person name="Takiguchi S."/>
            <person name="Watanabe S."/>
            <person name="Yosida M."/>
            <person name="Hotuta T."/>
            <person name="Kusano J."/>
            <person name="Kanehori K."/>
            <person name="Takahashi-Fujii A."/>
            <person name="Hara H."/>
            <person name="Tanase T.-O."/>
            <person name="Nomura Y."/>
            <person name="Togiya S."/>
            <person name="Komai F."/>
            <person name="Hara R."/>
            <person name="Takeuchi K."/>
            <person name="Arita M."/>
            <person name="Imose N."/>
            <person name="Musashino K."/>
            <person name="Yuuki H."/>
            <person name="Oshima A."/>
            <person name="Sasaki N."/>
            <person name="Aotsuka S."/>
            <person name="Yoshikawa Y."/>
            <person name="Matsunawa H."/>
            <person name="Ichihara T."/>
            <person name="Shiohata N."/>
            <person name="Sano S."/>
            <person name="Moriya S."/>
            <person name="Momiyama H."/>
            <person name="Satoh N."/>
            <person name="Takami S."/>
            <person name="Terashima Y."/>
            <person name="Suzuki O."/>
            <person name="Nakagawa S."/>
            <person name="Senoh A."/>
            <person name="Mizoguchi H."/>
            <person name="Goto Y."/>
            <person name="Shimizu F."/>
            <person name="Wakebe H."/>
            <person name="Hishigaki H."/>
            <person name="Watanabe T."/>
            <person name="Sugiyama A."/>
            <person name="Takemoto M."/>
            <person name="Kawakami B."/>
            <person name="Yamazaki M."/>
            <person name="Watanabe K."/>
            <person name="Kumagai A."/>
            <person name="Itakura S."/>
            <person name="Fukuzumi Y."/>
            <person name="Fujimori Y."/>
            <person name="Komiyama M."/>
            <person name="Tashiro H."/>
            <person name="Tanigami A."/>
            <person name="Fujiwara T."/>
            <person name="Ono T."/>
            <person name="Yamada K."/>
            <person name="Fujii Y."/>
            <person name="Ozaki K."/>
            <person name="Hirao M."/>
            <person name="Ohmori Y."/>
            <person name="Kawabata A."/>
            <person name="Hikiji T."/>
            <person name="Kobatake N."/>
            <person name="Inagaki H."/>
            <person name="Ikema Y."/>
            <person name="Okamoto S."/>
            <person name="Okitani R."/>
            <person name="Kawakami T."/>
            <person name="Noguchi S."/>
            <person name="Itoh T."/>
            <person name="Shigeta K."/>
            <person name="Senba T."/>
            <person name="Matsumura K."/>
            <person name="Nakajima Y."/>
            <person name="Mizuno T."/>
            <person name="Morinaga M."/>
            <person name="Sasaki M."/>
            <person name="Togashi T."/>
            <person name="Oyama M."/>
            <person name="Hata H."/>
            <person name="Watanabe M."/>
            <person name="Komatsu T."/>
            <person name="Mizushima-Sugano J."/>
            <person name="Satoh T."/>
            <person name="Shirai Y."/>
            <person name="Takahashi Y."/>
            <person name="Nakagawa K."/>
            <person name="Okumura K."/>
            <person name="Nagase T."/>
            <person name="Nomura N."/>
            <person name="Kikuchi H."/>
            <person name="Masuho Y."/>
            <person name="Yamashita R."/>
            <person name="Nakai K."/>
            <person name="Yada T."/>
            <person name="Nakamura Y."/>
            <person name="Ohara O."/>
            <person name="Isogai T."/>
            <person name="Sugano S."/>
        </authorList>
    </citation>
    <scope>NUCLEOTIDE SEQUENCE [LARGE SCALE MRNA]</scope>
    <scope>VARIANT MET-253</scope>
    <source>
        <tissue>Testis</tissue>
    </source>
</reference>
<reference key="4">
    <citation type="journal article" date="2004" name="Nature">
        <title>DNA sequence and analysis of human chromosome 9.</title>
        <authorList>
            <person name="Humphray S.J."/>
            <person name="Oliver K."/>
            <person name="Hunt A.R."/>
            <person name="Plumb R.W."/>
            <person name="Loveland J.E."/>
            <person name="Howe K.L."/>
            <person name="Andrews T.D."/>
            <person name="Searle S."/>
            <person name="Hunt S.E."/>
            <person name="Scott C.E."/>
            <person name="Jones M.C."/>
            <person name="Ainscough R."/>
            <person name="Almeida J.P."/>
            <person name="Ambrose K.D."/>
            <person name="Ashwell R.I.S."/>
            <person name="Babbage A.K."/>
            <person name="Babbage S."/>
            <person name="Bagguley C.L."/>
            <person name="Bailey J."/>
            <person name="Banerjee R."/>
            <person name="Barker D.J."/>
            <person name="Barlow K.F."/>
            <person name="Bates K."/>
            <person name="Beasley H."/>
            <person name="Beasley O."/>
            <person name="Bird C.P."/>
            <person name="Bray-Allen S."/>
            <person name="Brown A.J."/>
            <person name="Brown J.Y."/>
            <person name="Burford D."/>
            <person name="Burrill W."/>
            <person name="Burton J."/>
            <person name="Carder C."/>
            <person name="Carter N.P."/>
            <person name="Chapman J.C."/>
            <person name="Chen Y."/>
            <person name="Clarke G."/>
            <person name="Clark S.Y."/>
            <person name="Clee C.M."/>
            <person name="Clegg S."/>
            <person name="Collier R.E."/>
            <person name="Corby N."/>
            <person name="Crosier M."/>
            <person name="Cummings A.T."/>
            <person name="Davies J."/>
            <person name="Dhami P."/>
            <person name="Dunn M."/>
            <person name="Dutta I."/>
            <person name="Dyer L.W."/>
            <person name="Earthrowl M.E."/>
            <person name="Faulkner L."/>
            <person name="Fleming C.J."/>
            <person name="Frankish A."/>
            <person name="Frankland J.A."/>
            <person name="French L."/>
            <person name="Fricker D.G."/>
            <person name="Garner P."/>
            <person name="Garnett J."/>
            <person name="Ghori J."/>
            <person name="Gilbert J.G.R."/>
            <person name="Glison C."/>
            <person name="Grafham D.V."/>
            <person name="Gribble S."/>
            <person name="Griffiths C."/>
            <person name="Griffiths-Jones S."/>
            <person name="Grocock R."/>
            <person name="Guy J."/>
            <person name="Hall R.E."/>
            <person name="Hammond S."/>
            <person name="Harley J.L."/>
            <person name="Harrison E.S.I."/>
            <person name="Hart E.A."/>
            <person name="Heath P.D."/>
            <person name="Henderson C.D."/>
            <person name="Hopkins B.L."/>
            <person name="Howard P.J."/>
            <person name="Howden P.J."/>
            <person name="Huckle E."/>
            <person name="Johnson C."/>
            <person name="Johnson D."/>
            <person name="Joy A.A."/>
            <person name="Kay M."/>
            <person name="Keenan S."/>
            <person name="Kershaw J.K."/>
            <person name="Kimberley A.M."/>
            <person name="King A."/>
            <person name="Knights A."/>
            <person name="Laird G.K."/>
            <person name="Langford C."/>
            <person name="Lawlor S."/>
            <person name="Leongamornlert D.A."/>
            <person name="Leversha M."/>
            <person name="Lloyd C."/>
            <person name="Lloyd D.M."/>
            <person name="Lovell J."/>
            <person name="Martin S."/>
            <person name="Mashreghi-Mohammadi M."/>
            <person name="Matthews L."/>
            <person name="McLaren S."/>
            <person name="McLay K.E."/>
            <person name="McMurray A."/>
            <person name="Milne S."/>
            <person name="Nickerson T."/>
            <person name="Nisbett J."/>
            <person name="Nordsiek G."/>
            <person name="Pearce A.V."/>
            <person name="Peck A.I."/>
            <person name="Porter K.M."/>
            <person name="Pandian R."/>
            <person name="Pelan S."/>
            <person name="Phillimore B."/>
            <person name="Povey S."/>
            <person name="Ramsey Y."/>
            <person name="Rand V."/>
            <person name="Scharfe M."/>
            <person name="Sehra H.K."/>
            <person name="Shownkeen R."/>
            <person name="Sims S.K."/>
            <person name="Skuce C.D."/>
            <person name="Smith M."/>
            <person name="Steward C.A."/>
            <person name="Swarbreck D."/>
            <person name="Sycamore N."/>
            <person name="Tester J."/>
            <person name="Thorpe A."/>
            <person name="Tracey A."/>
            <person name="Tromans A."/>
            <person name="Thomas D.W."/>
            <person name="Wall M."/>
            <person name="Wallis J.M."/>
            <person name="West A.P."/>
            <person name="Whitehead S.L."/>
            <person name="Willey D.L."/>
            <person name="Williams S.A."/>
            <person name="Wilming L."/>
            <person name="Wray P.W."/>
            <person name="Young L."/>
            <person name="Ashurst J.L."/>
            <person name="Coulson A."/>
            <person name="Blocker H."/>
            <person name="Durbin R.M."/>
            <person name="Sulston J.E."/>
            <person name="Hubbard T."/>
            <person name="Jackson M.J."/>
            <person name="Bentley D.R."/>
            <person name="Beck S."/>
            <person name="Rogers J."/>
            <person name="Dunham I."/>
        </authorList>
    </citation>
    <scope>NUCLEOTIDE SEQUENCE [LARGE SCALE GENOMIC DNA]</scope>
</reference>
<reference key="5">
    <citation type="journal article" date="2004" name="Genome Res.">
        <title>The status, quality, and expansion of the NIH full-length cDNA project: the Mammalian Gene Collection (MGC).</title>
        <authorList>
            <consortium name="The MGC Project Team"/>
        </authorList>
    </citation>
    <scope>NUCLEOTIDE SEQUENCE [LARGE SCALE MRNA]</scope>
    <scope>VARIANTS LEU-107 AND MET-253</scope>
    <source>
        <tissue>Eye</tissue>
    </source>
</reference>
<reference key="6">
    <citation type="journal article" date="2011" name="BMC Syst. Biol.">
        <title>Initial characterization of the human central proteome.</title>
        <authorList>
            <person name="Burkard T.R."/>
            <person name="Planyavsky M."/>
            <person name="Kaupe I."/>
            <person name="Breitwieser F.P."/>
            <person name="Buerckstuemmer T."/>
            <person name="Bennett K.L."/>
            <person name="Superti-Furga G."/>
            <person name="Colinge J."/>
        </authorList>
    </citation>
    <scope>IDENTIFICATION BY MASS SPECTROMETRY [LARGE SCALE ANALYSIS]</scope>
</reference>
<reference key="7">
    <citation type="journal article" date="2014" name="J. Proteomics">
        <title>An enzyme assisted RP-RPLC approach for in-depth analysis of human liver phosphoproteome.</title>
        <authorList>
            <person name="Bian Y."/>
            <person name="Song C."/>
            <person name="Cheng K."/>
            <person name="Dong M."/>
            <person name="Wang F."/>
            <person name="Huang J."/>
            <person name="Sun D."/>
            <person name="Wang L."/>
            <person name="Ye M."/>
            <person name="Zou H."/>
        </authorList>
    </citation>
    <scope>IDENTIFICATION BY MASS SPECTROMETRY [LARGE SCALE ANALYSIS]</scope>
    <source>
        <tissue>Liver</tissue>
    </source>
</reference>
<reference key="8">
    <citation type="journal article" date="2015" name="Proteomics">
        <title>N-terminome analysis of the human mitochondrial proteome.</title>
        <authorList>
            <person name="Vaca Jacome A.S."/>
            <person name="Rabilloud T."/>
            <person name="Schaeffer-Reiss C."/>
            <person name="Rompais M."/>
            <person name="Ayoub D."/>
            <person name="Lane L."/>
            <person name="Bairoch A."/>
            <person name="Van Dorsselaer A."/>
            <person name="Carapito C."/>
        </authorList>
    </citation>
    <scope>IDENTIFICATION BY MASS SPECTROMETRY [LARGE SCALE ANALYSIS]</scope>
</reference>
<reference key="9">
    <citation type="journal article" date="1993" name="Hum. Genet.">
        <title>Diverse polymorphism within a short coding region of the human aldehyde dehydrogenase-5 (ALDH5) gene.</title>
        <authorList>
            <person name="Sherman D."/>
            <person name="Dave V."/>
            <person name="Hsu L.C."/>
            <person name="Peters T.J."/>
            <person name="Yoshida A."/>
        </authorList>
    </citation>
    <scope>VARIANTS VAL-86 AND LEU-107</scope>
</reference>
<accession>P30837</accession>
<accession>B2R8F0</accession>
<accession>Q8WX76</accession>
<accession>Q9BV45</accession>
<protein>
    <recommendedName>
        <fullName>Aldehyde dehydrogenase X, mitochondrial</fullName>
        <ecNumber>1.2.1.3</ecNumber>
    </recommendedName>
    <alternativeName>
        <fullName>Aldehyde dehydrogenase 5</fullName>
    </alternativeName>
    <alternativeName>
        <fullName>Aldehyde dehydrogenase family 1 member B1</fullName>
    </alternativeName>
</protein>
<dbReference type="EC" id="1.2.1.3"/>
<dbReference type="EMBL" id="M63967">
    <property type="protein sequence ID" value="AAA96830.1"/>
    <property type="molecule type" value="Genomic_DNA"/>
</dbReference>
<dbReference type="EMBL" id="BT007418">
    <property type="protein sequence ID" value="AAP36086.1"/>
    <property type="molecule type" value="mRNA"/>
</dbReference>
<dbReference type="EMBL" id="AK313344">
    <property type="protein sequence ID" value="BAG36147.1"/>
    <property type="molecule type" value="mRNA"/>
</dbReference>
<dbReference type="EMBL" id="AL135785">
    <property type="status" value="NOT_ANNOTATED_CDS"/>
    <property type="molecule type" value="Genomic_DNA"/>
</dbReference>
<dbReference type="EMBL" id="BC001619">
    <property type="protein sequence ID" value="AAH01619.1"/>
    <property type="molecule type" value="mRNA"/>
</dbReference>
<dbReference type="CCDS" id="CCDS6615.1"/>
<dbReference type="PIR" id="A40872">
    <property type="entry name" value="A40872"/>
</dbReference>
<dbReference type="RefSeq" id="NP_000683.3">
    <property type="nucleotide sequence ID" value="NM_000692.4"/>
</dbReference>
<dbReference type="RefSeq" id="XP_011516104.1">
    <property type="nucleotide sequence ID" value="XM_011517802.2"/>
</dbReference>
<dbReference type="PDB" id="7MJC">
    <property type="method" value="X-ray"/>
    <property type="resolution" value="2.68 A"/>
    <property type="chains" value="A/B=20-517"/>
</dbReference>
<dbReference type="PDB" id="7MJD">
    <property type="method" value="X-ray"/>
    <property type="resolution" value="2.12 A"/>
    <property type="chains" value="A/B=20-517"/>
</dbReference>
<dbReference type="PDB" id="7RAD">
    <property type="method" value="X-ray"/>
    <property type="resolution" value="2.30 A"/>
    <property type="chains" value="A/B=25-517"/>
</dbReference>
<dbReference type="PDBsum" id="7MJC"/>
<dbReference type="PDBsum" id="7MJD"/>
<dbReference type="PDBsum" id="7RAD"/>
<dbReference type="SMR" id="P30837"/>
<dbReference type="BioGRID" id="106721">
    <property type="interactions" value="212"/>
</dbReference>
<dbReference type="FunCoup" id="P30837">
    <property type="interactions" value="1980"/>
</dbReference>
<dbReference type="IntAct" id="P30837">
    <property type="interactions" value="60"/>
</dbReference>
<dbReference type="MINT" id="P30837"/>
<dbReference type="STRING" id="9606.ENSP00000366927"/>
<dbReference type="BindingDB" id="P30837"/>
<dbReference type="ChEMBL" id="CHEMBL4881"/>
<dbReference type="DrugBank" id="DB09116">
    <property type="generic name" value="Calcium carbimide"/>
</dbReference>
<dbReference type="DrugBank" id="DB00157">
    <property type="generic name" value="NADH"/>
</dbReference>
<dbReference type="GlyGen" id="P30837">
    <property type="glycosylation" value="2 sites, 1 O-linked glycan (1 site)"/>
</dbReference>
<dbReference type="iPTMnet" id="P30837"/>
<dbReference type="PhosphoSitePlus" id="P30837"/>
<dbReference type="SwissPalm" id="P30837"/>
<dbReference type="BioMuta" id="ALDH1B1"/>
<dbReference type="DMDM" id="311033472"/>
<dbReference type="REPRODUCTION-2DPAGE" id="IPI00103467"/>
<dbReference type="jPOST" id="P30837"/>
<dbReference type="MassIVE" id="P30837"/>
<dbReference type="PaxDb" id="9606-ENSP00000366927"/>
<dbReference type="PeptideAtlas" id="P30837"/>
<dbReference type="ProteomicsDB" id="54740"/>
<dbReference type="Pumba" id="P30837"/>
<dbReference type="Antibodypedia" id="12074">
    <property type="antibodies" value="283 antibodies from 34 providers"/>
</dbReference>
<dbReference type="DNASU" id="219"/>
<dbReference type="Ensembl" id="ENST00000377698.4">
    <property type="protein sequence ID" value="ENSP00000366927.3"/>
    <property type="gene ID" value="ENSG00000137124.8"/>
</dbReference>
<dbReference type="GeneID" id="219"/>
<dbReference type="KEGG" id="hsa:219"/>
<dbReference type="MANE-Select" id="ENST00000377698.4">
    <property type="protein sequence ID" value="ENSP00000366927.3"/>
    <property type="RefSeq nucleotide sequence ID" value="NM_000692.5"/>
    <property type="RefSeq protein sequence ID" value="NP_000683.3"/>
</dbReference>
<dbReference type="UCSC" id="uc004aay.4">
    <property type="organism name" value="human"/>
</dbReference>
<dbReference type="AGR" id="HGNC:407"/>
<dbReference type="CTD" id="219"/>
<dbReference type="DisGeNET" id="219"/>
<dbReference type="GeneCards" id="ALDH1B1"/>
<dbReference type="HGNC" id="HGNC:407">
    <property type="gene designation" value="ALDH1B1"/>
</dbReference>
<dbReference type="HPA" id="ENSG00000137124">
    <property type="expression patterns" value="Tissue enhanced (liver, smooth muscle)"/>
</dbReference>
<dbReference type="MalaCards" id="ALDH1B1"/>
<dbReference type="MIM" id="100670">
    <property type="type" value="gene"/>
</dbReference>
<dbReference type="neXtProt" id="NX_P30837"/>
<dbReference type="OpenTargets" id="ENSG00000137124"/>
<dbReference type="PharmGKB" id="PA24695"/>
<dbReference type="VEuPathDB" id="HostDB:ENSG00000137124"/>
<dbReference type="eggNOG" id="KOG2450">
    <property type="taxonomic scope" value="Eukaryota"/>
</dbReference>
<dbReference type="GeneTree" id="ENSGT00940000162530"/>
<dbReference type="HOGENOM" id="CLU_005391_0_2_1"/>
<dbReference type="InParanoid" id="P30837"/>
<dbReference type="OMA" id="WVNRYGR"/>
<dbReference type="OrthoDB" id="310895at2759"/>
<dbReference type="PAN-GO" id="P30837">
    <property type="GO annotations" value="1 GO annotation based on evolutionary models"/>
</dbReference>
<dbReference type="PhylomeDB" id="P30837"/>
<dbReference type="TreeFam" id="TF300455"/>
<dbReference type="BRENDA" id="1.2.1.3">
    <property type="organism ID" value="2681"/>
</dbReference>
<dbReference type="PathwayCommons" id="P30837"/>
<dbReference type="Reactome" id="R-HSA-71384">
    <property type="pathway name" value="Ethanol oxidation"/>
</dbReference>
<dbReference type="Reactome" id="R-HSA-9837999">
    <property type="pathway name" value="Mitochondrial protein degradation"/>
</dbReference>
<dbReference type="SABIO-RK" id="P30837"/>
<dbReference type="SignaLink" id="P30837"/>
<dbReference type="UniPathway" id="UPA00780">
    <property type="reaction ID" value="UER00768"/>
</dbReference>
<dbReference type="BioGRID-ORCS" id="219">
    <property type="hits" value="13 hits in 1164 CRISPR screens"/>
</dbReference>
<dbReference type="CD-CODE" id="91857CE7">
    <property type="entry name" value="Nucleolus"/>
</dbReference>
<dbReference type="ChiTaRS" id="ALDH1B1">
    <property type="organism name" value="human"/>
</dbReference>
<dbReference type="GeneWiki" id="ALDH1B1"/>
<dbReference type="GenomeRNAi" id="219"/>
<dbReference type="Pharos" id="P30837">
    <property type="development level" value="Tchem"/>
</dbReference>
<dbReference type="PRO" id="PR:P30837"/>
<dbReference type="Proteomes" id="UP000005640">
    <property type="component" value="Chromosome 9"/>
</dbReference>
<dbReference type="RNAct" id="P30837">
    <property type="molecule type" value="protein"/>
</dbReference>
<dbReference type="Bgee" id="ENSG00000137124">
    <property type="expression patterns" value="Expressed in buccal mucosa cell and 143 other cell types or tissues"/>
</dbReference>
<dbReference type="ExpressionAtlas" id="P30837">
    <property type="expression patterns" value="baseline and differential"/>
</dbReference>
<dbReference type="GO" id="GO:0005829">
    <property type="term" value="C:cytosol"/>
    <property type="evidence" value="ECO:0000314"/>
    <property type="project" value="HPA"/>
</dbReference>
<dbReference type="GO" id="GO:0005759">
    <property type="term" value="C:mitochondrial matrix"/>
    <property type="evidence" value="ECO:0000304"/>
    <property type="project" value="Reactome"/>
</dbReference>
<dbReference type="GO" id="GO:0005739">
    <property type="term" value="C:mitochondrion"/>
    <property type="evidence" value="ECO:0000314"/>
    <property type="project" value="HPA"/>
</dbReference>
<dbReference type="GO" id="GO:0005654">
    <property type="term" value="C:nucleoplasm"/>
    <property type="evidence" value="ECO:0000314"/>
    <property type="project" value="HPA"/>
</dbReference>
<dbReference type="GO" id="GO:0004029">
    <property type="term" value="F:aldehyde dehydrogenase (NAD+) activity"/>
    <property type="evidence" value="ECO:0000318"/>
    <property type="project" value="GO_Central"/>
</dbReference>
<dbReference type="GO" id="GO:0051287">
    <property type="term" value="F:NAD binding"/>
    <property type="evidence" value="ECO:0000250"/>
    <property type="project" value="CAFA"/>
</dbReference>
<dbReference type="GO" id="GO:0005975">
    <property type="term" value="P:carbohydrate metabolic process"/>
    <property type="evidence" value="ECO:0000303"/>
    <property type="project" value="ProtInc"/>
</dbReference>
<dbReference type="GO" id="GO:0006068">
    <property type="term" value="P:ethanol catabolic process"/>
    <property type="evidence" value="ECO:0007669"/>
    <property type="project" value="UniProtKB-UniPathway"/>
</dbReference>
<dbReference type="CDD" id="cd07141">
    <property type="entry name" value="ALDH_F1AB_F2_RALDH1"/>
    <property type="match status" value="1"/>
</dbReference>
<dbReference type="FunFam" id="3.40.605.10:FF:000029">
    <property type="entry name" value="Aldehyde dehydrogenase, mitochondrial"/>
    <property type="match status" value="1"/>
</dbReference>
<dbReference type="FunFam" id="3.40.605.10:FF:000026">
    <property type="entry name" value="Aldehyde dehydrogenase, putative"/>
    <property type="match status" value="1"/>
</dbReference>
<dbReference type="FunFam" id="3.40.309.10:FF:000001">
    <property type="entry name" value="Mitochondrial aldehyde dehydrogenase 2"/>
    <property type="match status" value="1"/>
</dbReference>
<dbReference type="Gene3D" id="3.40.605.10">
    <property type="entry name" value="Aldehyde Dehydrogenase, Chain A, domain 1"/>
    <property type="match status" value="1"/>
</dbReference>
<dbReference type="Gene3D" id="3.40.309.10">
    <property type="entry name" value="Aldehyde Dehydrogenase, Chain A, domain 2"/>
    <property type="match status" value="1"/>
</dbReference>
<dbReference type="InterPro" id="IPR016161">
    <property type="entry name" value="Ald_DH/histidinol_DH"/>
</dbReference>
<dbReference type="InterPro" id="IPR016163">
    <property type="entry name" value="Ald_DH_C"/>
</dbReference>
<dbReference type="InterPro" id="IPR016160">
    <property type="entry name" value="Ald_DH_CS_CYS"/>
</dbReference>
<dbReference type="InterPro" id="IPR029510">
    <property type="entry name" value="Ald_DH_CS_GLU"/>
</dbReference>
<dbReference type="InterPro" id="IPR016162">
    <property type="entry name" value="Ald_DH_N"/>
</dbReference>
<dbReference type="InterPro" id="IPR015590">
    <property type="entry name" value="Aldehyde_DH_dom"/>
</dbReference>
<dbReference type="PANTHER" id="PTHR11699">
    <property type="entry name" value="ALDEHYDE DEHYDROGENASE-RELATED"/>
    <property type="match status" value="1"/>
</dbReference>
<dbReference type="Pfam" id="PF00171">
    <property type="entry name" value="Aldedh"/>
    <property type="match status" value="1"/>
</dbReference>
<dbReference type="SUPFAM" id="SSF53720">
    <property type="entry name" value="ALDH-like"/>
    <property type="match status" value="1"/>
</dbReference>
<dbReference type="PROSITE" id="PS00070">
    <property type="entry name" value="ALDEHYDE_DEHYDR_CYS"/>
    <property type="match status" value="1"/>
</dbReference>
<dbReference type="PROSITE" id="PS00687">
    <property type="entry name" value="ALDEHYDE_DEHYDR_GLU"/>
    <property type="match status" value="1"/>
</dbReference>
<keyword id="KW-0002">3D-structure</keyword>
<keyword id="KW-0007">Acetylation</keyword>
<keyword id="KW-0496">Mitochondrion</keyword>
<keyword id="KW-0520">NAD</keyword>
<keyword id="KW-0560">Oxidoreductase</keyword>
<keyword id="KW-1267">Proteomics identification</keyword>
<keyword id="KW-1185">Reference proteome</keyword>
<keyword id="KW-0809">Transit peptide</keyword>